<keyword id="KW-0028">Amino-acid biosynthesis</keyword>
<keyword id="KW-0055">Arginine biosynthesis</keyword>
<keyword id="KW-0963">Cytoplasm</keyword>
<keyword id="KW-0521">NADP</keyword>
<keyword id="KW-0560">Oxidoreductase</keyword>
<keyword id="KW-1185">Reference proteome</keyword>
<organism>
    <name type="scientific">Clostridium kluyveri (strain ATCC 8527 / DSM 555 / NBRC 12016 / NCIMB 10680 / K1)</name>
    <dbReference type="NCBI Taxonomy" id="431943"/>
    <lineage>
        <taxon>Bacteria</taxon>
        <taxon>Bacillati</taxon>
        <taxon>Bacillota</taxon>
        <taxon>Clostridia</taxon>
        <taxon>Eubacteriales</taxon>
        <taxon>Clostridiaceae</taxon>
        <taxon>Clostridium</taxon>
    </lineage>
</organism>
<comment type="function">
    <text evidence="1">Catalyzes the NADPH-dependent reduction of N-acetyl-5-glutamyl phosphate to yield N-acetyl-L-glutamate 5-semialdehyde.</text>
</comment>
<comment type="catalytic activity">
    <reaction evidence="1">
        <text>N-acetyl-L-glutamate 5-semialdehyde + phosphate + NADP(+) = N-acetyl-L-glutamyl 5-phosphate + NADPH + H(+)</text>
        <dbReference type="Rhea" id="RHEA:21588"/>
        <dbReference type="ChEBI" id="CHEBI:15378"/>
        <dbReference type="ChEBI" id="CHEBI:29123"/>
        <dbReference type="ChEBI" id="CHEBI:43474"/>
        <dbReference type="ChEBI" id="CHEBI:57783"/>
        <dbReference type="ChEBI" id="CHEBI:57936"/>
        <dbReference type="ChEBI" id="CHEBI:58349"/>
        <dbReference type="EC" id="1.2.1.38"/>
    </reaction>
</comment>
<comment type="pathway">
    <text evidence="1">Amino-acid biosynthesis; L-arginine biosynthesis; N(2)-acetyl-L-ornithine from L-glutamate: step 3/4.</text>
</comment>
<comment type="subcellular location">
    <subcellularLocation>
        <location evidence="1">Cytoplasm</location>
    </subcellularLocation>
</comment>
<comment type="similarity">
    <text evidence="1">Belongs to the NAGSA dehydrogenase family. Type 1 subfamily.</text>
</comment>
<evidence type="ECO:0000255" key="1">
    <source>
        <dbReference type="HAMAP-Rule" id="MF_00150"/>
    </source>
</evidence>
<dbReference type="EC" id="1.2.1.38" evidence="1"/>
<dbReference type="EMBL" id="CP000673">
    <property type="protein sequence ID" value="EDK33595.1"/>
    <property type="molecule type" value="Genomic_DNA"/>
</dbReference>
<dbReference type="RefSeq" id="WP_012101945.1">
    <property type="nucleotide sequence ID" value="NC_009706.1"/>
</dbReference>
<dbReference type="SMR" id="A5N8G4"/>
<dbReference type="STRING" id="431943.CKL_1553"/>
<dbReference type="KEGG" id="ckl:CKL_1553"/>
<dbReference type="eggNOG" id="COG0002">
    <property type="taxonomic scope" value="Bacteria"/>
</dbReference>
<dbReference type="HOGENOM" id="CLU_006384_0_1_9"/>
<dbReference type="UniPathway" id="UPA00068">
    <property type="reaction ID" value="UER00108"/>
</dbReference>
<dbReference type="Proteomes" id="UP000002411">
    <property type="component" value="Chromosome"/>
</dbReference>
<dbReference type="GO" id="GO:0005737">
    <property type="term" value="C:cytoplasm"/>
    <property type="evidence" value="ECO:0007669"/>
    <property type="project" value="UniProtKB-SubCell"/>
</dbReference>
<dbReference type="GO" id="GO:0003942">
    <property type="term" value="F:N-acetyl-gamma-glutamyl-phosphate reductase activity"/>
    <property type="evidence" value="ECO:0007669"/>
    <property type="project" value="UniProtKB-UniRule"/>
</dbReference>
<dbReference type="GO" id="GO:0051287">
    <property type="term" value="F:NAD binding"/>
    <property type="evidence" value="ECO:0007669"/>
    <property type="project" value="InterPro"/>
</dbReference>
<dbReference type="GO" id="GO:0070401">
    <property type="term" value="F:NADP+ binding"/>
    <property type="evidence" value="ECO:0007669"/>
    <property type="project" value="InterPro"/>
</dbReference>
<dbReference type="GO" id="GO:0006526">
    <property type="term" value="P:L-arginine biosynthetic process"/>
    <property type="evidence" value="ECO:0007669"/>
    <property type="project" value="UniProtKB-UniRule"/>
</dbReference>
<dbReference type="CDD" id="cd23934">
    <property type="entry name" value="AGPR_1_C"/>
    <property type="match status" value="1"/>
</dbReference>
<dbReference type="CDD" id="cd17895">
    <property type="entry name" value="AGPR_1_N"/>
    <property type="match status" value="1"/>
</dbReference>
<dbReference type="FunFam" id="3.30.360.10:FF:000014">
    <property type="entry name" value="N-acetyl-gamma-glutamyl-phosphate reductase"/>
    <property type="match status" value="1"/>
</dbReference>
<dbReference type="Gene3D" id="3.30.360.10">
    <property type="entry name" value="Dihydrodipicolinate Reductase, domain 2"/>
    <property type="match status" value="1"/>
</dbReference>
<dbReference type="Gene3D" id="3.40.50.720">
    <property type="entry name" value="NAD(P)-binding Rossmann-like Domain"/>
    <property type="match status" value="1"/>
</dbReference>
<dbReference type="HAMAP" id="MF_00150">
    <property type="entry name" value="ArgC_type1"/>
    <property type="match status" value="1"/>
</dbReference>
<dbReference type="InterPro" id="IPR023013">
    <property type="entry name" value="AGPR_AS"/>
</dbReference>
<dbReference type="InterPro" id="IPR000706">
    <property type="entry name" value="AGPR_type-1"/>
</dbReference>
<dbReference type="InterPro" id="IPR036291">
    <property type="entry name" value="NAD(P)-bd_dom_sf"/>
</dbReference>
<dbReference type="InterPro" id="IPR050085">
    <property type="entry name" value="NAGSA_dehydrogenase"/>
</dbReference>
<dbReference type="InterPro" id="IPR000534">
    <property type="entry name" value="Semialdehyde_DH_NAD-bd"/>
</dbReference>
<dbReference type="NCBIfam" id="TIGR01850">
    <property type="entry name" value="argC"/>
    <property type="match status" value="1"/>
</dbReference>
<dbReference type="PANTHER" id="PTHR32338:SF10">
    <property type="entry name" value="N-ACETYL-GAMMA-GLUTAMYL-PHOSPHATE REDUCTASE, CHLOROPLASTIC-RELATED"/>
    <property type="match status" value="1"/>
</dbReference>
<dbReference type="PANTHER" id="PTHR32338">
    <property type="entry name" value="N-ACETYL-GAMMA-GLUTAMYL-PHOSPHATE REDUCTASE, CHLOROPLASTIC-RELATED-RELATED"/>
    <property type="match status" value="1"/>
</dbReference>
<dbReference type="Pfam" id="PF01118">
    <property type="entry name" value="Semialdhyde_dh"/>
    <property type="match status" value="1"/>
</dbReference>
<dbReference type="Pfam" id="PF22698">
    <property type="entry name" value="Semialdhyde_dhC_1"/>
    <property type="match status" value="1"/>
</dbReference>
<dbReference type="SMART" id="SM00859">
    <property type="entry name" value="Semialdhyde_dh"/>
    <property type="match status" value="1"/>
</dbReference>
<dbReference type="SUPFAM" id="SSF55347">
    <property type="entry name" value="Glyceraldehyde-3-phosphate dehydrogenase-like, C-terminal domain"/>
    <property type="match status" value="1"/>
</dbReference>
<dbReference type="SUPFAM" id="SSF51735">
    <property type="entry name" value="NAD(P)-binding Rossmann-fold domains"/>
    <property type="match status" value="1"/>
</dbReference>
<dbReference type="PROSITE" id="PS01224">
    <property type="entry name" value="ARGC"/>
    <property type="match status" value="1"/>
</dbReference>
<proteinExistence type="inferred from homology"/>
<accession>A5N8G4</accession>
<gene>
    <name evidence="1" type="primary">argC</name>
    <name type="ordered locus">CKL_1553</name>
</gene>
<feature type="chain" id="PRO_1000076730" description="N-acetyl-gamma-glutamyl-phosphate reductase">
    <location>
        <begin position="1"/>
        <end position="344"/>
    </location>
</feature>
<feature type="active site" evidence="1">
    <location>
        <position position="148"/>
    </location>
</feature>
<sequence length="344" mass="38104">MVQVGVIGGTGYVGAELIRLLSNHNKIKISGISSTSYEGKSINSLYPGFYDLKELVCEKDDEVIKRSDLIFLALPSGVSEPIVEKAVAKDKICIDMGADFRFKNESSYKKWYGKNFITPKLHESSVYGLPELNREYIKKSRVIGNPGCYATSVQIGVLPLISKGLIEEKGIIADCKSGLTGAGKTLSESSHFVNCNESFSAYKVANHRHTPEIEENLNSVSKEGVKLTFIPHLIPINRGILSTIYTTPKDPIDIEKIHQKYCEFYKEEPFVRILPLGKVSKINNVRLSNYCCISIHYDSENNKLIIISCLDNMIKGAAGQAIQNMNIVLGFDEKEGLTALPAVF</sequence>
<protein>
    <recommendedName>
        <fullName evidence="1">N-acetyl-gamma-glutamyl-phosphate reductase</fullName>
        <shortName evidence="1">AGPR</shortName>
        <ecNumber evidence="1">1.2.1.38</ecNumber>
    </recommendedName>
    <alternativeName>
        <fullName evidence="1">N-acetyl-glutamate semialdehyde dehydrogenase</fullName>
        <shortName evidence="1">NAGSA dehydrogenase</shortName>
    </alternativeName>
</protein>
<name>ARGC_CLOK5</name>
<reference key="1">
    <citation type="journal article" date="2008" name="Proc. Natl. Acad. Sci. U.S.A.">
        <title>The genome of Clostridium kluyveri, a strict anaerobe with unique metabolic features.</title>
        <authorList>
            <person name="Seedorf H."/>
            <person name="Fricke W.F."/>
            <person name="Veith B."/>
            <person name="Brueggemann H."/>
            <person name="Liesegang H."/>
            <person name="Strittmatter A."/>
            <person name="Miethke M."/>
            <person name="Buckel W."/>
            <person name="Hinderberger J."/>
            <person name="Li F."/>
            <person name="Hagemeier C."/>
            <person name="Thauer R.K."/>
            <person name="Gottschalk G."/>
        </authorList>
    </citation>
    <scope>NUCLEOTIDE SEQUENCE [LARGE SCALE GENOMIC DNA]</scope>
    <source>
        <strain>ATCC 8527 / DSM 555 / NBRC 12016 / NCIMB 10680 / K1</strain>
    </source>
</reference>